<organism>
    <name type="scientific">Streptococcus pyogenes serotype M6 (strain ATCC BAA-946 / MGAS10394)</name>
    <dbReference type="NCBI Taxonomy" id="286636"/>
    <lineage>
        <taxon>Bacteria</taxon>
        <taxon>Bacillati</taxon>
        <taxon>Bacillota</taxon>
        <taxon>Bacilli</taxon>
        <taxon>Lactobacillales</taxon>
        <taxon>Streptococcaceae</taxon>
        <taxon>Streptococcus</taxon>
    </lineage>
</organism>
<comment type="function">
    <text evidence="1">Removes N-terminal dipeptides sequentially from polypeptides having unsubstituted N-termini provided that the penultimate residue is proline.</text>
</comment>
<comment type="catalytic activity">
    <reaction evidence="1">
        <text>Hydrolyzes Xaa-Pro-|- bonds to release unblocked, N-terminal dipeptides from substrates including Ala-Pro-|-p-nitroanilide and (sequentially) Tyr-Pro-|-Phe-Pro-|-Gly-Pro-|-Ile.</text>
        <dbReference type="EC" id="3.4.14.11"/>
    </reaction>
</comment>
<comment type="subunit">
    <text evidence="1">Homodimer.</text>
</comment>
<comment type="subcellular location">
    <subcellularLocation>
        <location evidence="1">Cytoplasm</location>
    </subcellularLocation>
</comment>
<comment type="similarity">
    <text evidence="1">Belongs to the peptidase S15 family.</text>
</comment>
<gene>
    <name evidence="1" type="primary">pepX</name>
    <name type="ordered locus">M6_Spy1588</name>
</gene>
<sequence>MRYNQFSYIPTSLERAAEELKELGFDLDLQKTAKANLESFLRKLFFHYPDSDYPLSHLIAKNDMDALSFFQSEQELSKEVFDLLALQVLGFIPGVDFTEADAFLDKLAFPIHFDETEIIKHIHHLLATRCKSGMTLIDDLVSQGMLTMDNDYHFFNGKSLATFDTSQLIREVVYVEAPLDTDQDGQLDLIKVNIIRPQSQKPLPTLMTPSPYHQGINEVANDKKLYRMEKELVVKKRRQITVEDRDFIPLETQPCKLPIGQNLESFSYINSYSLNDYFLARGFANIYVSGVGTAGSTGFMTSGDYAQIESFKAVIDWLNGRATAYTSHSKTHQVRADWANGLVCTTGKSYLGTMSTGLATTGVDGLAMIIAESAISSWYNYYRENGLVCSPGGYPGEDLDVLTELTYSRNLLAGDYLRHNDRYQELLNQQSQALDRQSGDYNQFWHDRNYLKNAHQIKCDVVYTHGLQDWNVKPRQVYEIFNALPSTINKHLFLHQGEHVYMHNWQSIDFRESMNALLCQKLLGLANDFSLPEMIWQDNTCLQNWQERKVFGTSTIKELDLGQELLLIDNHYGEDEFKAYGKDFRAFKAALFEGKANQALVDILLEEDLPINGEIVLQLKVKSSENKGLLSAQILDYGKKKRLGDLPIALTQSSIDNGQNFSRESLKELLFREDSYRVISKGFMNLQNRNNLSSIETIPNNKWMTVRLPLQPTIYHLEKGDTLRVILYTTDFEHTVRDNSNYALTIDLSQSQLIVPIASN</sequence>
<evidence type="ECO:0000255" key="1">
    <source>
        <dbReference type="HAMAP-Rule" id="MF_00698"/>
    </source>
</evidence>
<proteinExistence type="inferred from homology"/>
<dbReference type="EC" id="3.4.14.11" evidence="1"/>
<dbReference type="EMBL" id="CP000003">
    <property type="protein sequence ID" value="AAT87723.1"/>
    <property type="molecule type" value="Genomic_DNA"/>
</dbReference>
<dbReference type="RefSeq" id="WP_011184932.1">
    <property type="nucleotide sequence ID" value="NC_006086.1"/>
</dbReference>
<dbReference type="SMR" id="Q5XA40"/>
<dbReference type="ESTHER" id="strpy-PEPXP">
    <property type="family name" value="Lactobacillus_peptidase"/>
</dbReference>
<dbReference type="KEGG" id="spa:M6_Spy1588"/>
<dbReference type="HOGENOM" id="CLU_011800_0_0_9"/>
<dbReference type="Proteomes" id="UP000001167">
    <property type="component" value="Chromosome"/>
</dbReference>
<dbReference type="GO" id="GO:0005737">
    <property type="term" value="C:cytoplasm"/>
    <property type="evidence" value="ECO:0007669"/>
    <property type="project" value="UniProtKB-SubCell"/>
</dbReference>
<dbReference type="GO" id="GO:0004177">
    <property type="term" value="F:aminopeptidase activity"/>
    <property type="evidence" value="ECO:0007669"/>
    <property type="project" value="UniProtKB-KW"/>
</dbReference>
<dbReference type="GO" id="GO:0008239">
    <property type="term" value="F:dipeptidyl-peptidase activity"/>
    <property type="evidence" value="ECO:0007669"/>
    <property type="project" value="UniProtKB-UniRule"/>
</dbReference>
<dbReference type="GO" id="GO:0008236">
    <property type="term" value="F:serine-type peptidase activity"/>
    <property type="evidence" value="ECO:0007669"/>
    <property type="project" value="UniProtKB-KW"/>
</dbReference>
<dbReference type="GO" id="GO:0006508">
    <property type="term" value="P:proteolysis"/>
    <property type="evidence" value="ECO:0007669"/>
    <property type="project" value="UniProtKB-KW"/>
</dbReference>
<dbReference type="Gene3D" id="1.10.246.70">
    <property type="match status" value="1"/>
</dbReference>
<dbReference type="Gene3D" id="3.40.50.1820">
    <property type="entry name" value="alpha/beta hydrolase"/>
    <property type="match status" value="1"/>
</dbReference>
<dbReference type="Gene3D" id="2.60.120.260">
    <property type="entry name" value="Galactose-binding domain-like"/>
    <property type="match status" value="1"/>
</dbReference>
<dbReference type="HAMAP" id="MF_00698">
    <property type="entry name" value="Aminopeptidase_S15"/>
    <property type="match status" value="1"/>
</dbReference>
<dbReference type="InterPro" id="IPR029058">
    <property type="entry name" value="AB_hydrolase_fold"/>
</dbReference>
<dbReference type="InterPro" id="IPR008979">
    <property type="entry name" value="Galactose-bd-like_sf"/>
</dbReference>
<dbReference type="InterPro" id="IPR008252">
    <property type="entry name" value="Pept_S15_Xpro"/>
</dbReference>
<dbReference type="InterPro" id="IPR015251">
    <property type="entry name" value="PepX_N_dom"/>
</dbReference>
<dbReference type="InterPro" id="IPR036313">
    <property type="entry name" value="PepX_N_dom_sf"/>
</dbReference>
<dbReference type="InterPro" id="IPR000383">
    <property type="entry name" value="Xaa-Pro-like_dom"/>
</dbReference>
<dbReference type="InterPro" id="IPR013736">
    <property type="entry name" value="Xaa-Pro_dipept_C"/>
</dbReference>
<dbReference type="InterPro" id="IPR050585">
    <property type="entry name" value="Xaa-Pro_dipeptidyl-ppase/CocE"/>
</dbReference>
<dbReference type="NCBIfam" id="NF003783">
    <property type="entry name" value="PRK05371.1-4"/>
    <property type="match status" value="1"/>
</dbReference>
<dbReference type="PANTHER" id="PTHR43056:SF10">
    <property type="entry name" value="COCE_NOND FAMILY, PUTATIVE (AFU_ORTHOLOGUE AFUA_7G00600)-RELATED"/>
    <property type="match status" value="1"/>
</dbReference>
<dbReference type="PANTHER" id="PTHR43056">
    <property type="entry name" value="PEPTIDASE S9 PROLYL OLIGOPEPTIDASE"/>
    <property type="match status" value="1"/>
</dbReference>
<dbReference type="Pfam" id="PF02129">
    <property type="entry name" value="Peptidase_S15"/>
    <property type="match status" value="1"/>
</dbReference>
<dbReference type="Pfam" id="PF08530">
    <property type="entry name" value="PepX_C"/>
    <property type="match status" value="1"/>
</dbReference>
<dbReference type="Pfam" id="PF09168">
    <property type="entry name" value="PepX_N"/>
    <property type="match status" value="1"/>
</dbReference>
<dbReference type="PRINTS" id="PR00923">
    <property type="entry name" value="LACTOPTASE"/>
</dbReference>
<dbReference type="SMART" id="SM00939">
    <property type="entry name" value="PepX_C"/>
    <property type="match status" value="1"/>
</dbReference>
<dbReference type="SMART" id="SM00940">
    <property type="entry name" value="PepX_N"/>
    <property type="match status" value="1"/>
</dbReference>
<dbReference type="SUPFAM" id="SSF53474">
    <property type="entry name" value="alpha/beta-Hydrolases"/>
    <property type="match status" value="1"/>
</dbReference>
<dbReference type="SUPFAM" id="SSF49785">
    <property type="entry name" value="Galactose-binding domain-like"/>
    <property type="match status" value="1"/>
</dbReference>
<dbReference type="SUPFAM" id="SSF81761">
    <property type="entry name" value="X-Prolyl dipeptidyl aminopeptidase PepX, N-terminal domain"/>
    <property type="match status" value="1"/>
</dbReference>
<protein>
    <recommendedName>
        <fullName evidence="1">Xaa-Pro dipeptidyl-peptidase</fullName>
        <ecNumber evidence="1">3.4.14.11</ecNumber>
    </recommendedName>
    <alternativeName>
        <fullName evidence="1">X-Pro dipeptidyl-peptidase</fullName>
    </alternativeName>
    <alternativeName>
        <fullName evidence="1">X-prolyl-dipeptidyl aminopeptidase</fullName>
        <shortName evidence="1">X-PDAP</shortName>
    </alternativeName>
</protein>
<feature type="chain" id="PRO_0000220233" description="Xaa-Pro dipeptidyl-peptidase">
    <location>
        <begin position="1"/>
        <end position="760"/>
    </location>
</feature>
<feature type="active site" description="Charge relay system" evidence="1">
    <location>
        <position position="349"/>
    </location>
</feature>
<feature type="active site" description="Charge relay system" evidence="1">
    <location>
        <position position="469"/>
    </location>
</feature>
<feature type="active site" description="Charge relay system" evidence="1">
    <location>
        <position position="499"/>
    </location>
</feature>
<name>PEPX_STRP6</name>
<keyword id="KW-0031">Aminopeptidase</keyword>
<keyword id="KW-0963">Cytoplasm</keyword>
<keyword id="KW-0378">Hydrolase</keyword>
<keyword id="KW-0645">Protease</keyword>
<keyword id="KW-0720">Serine protease</keyword>
<reference key="1">
    <citation type="journal article" date="2004" name="J. Infect. Dis.">
        <title>Progress toward characterization of the group A Streptococcus metagenome: complete genome sequence of a macrolide-resistant serotype M6 strain.</title>
        <authorList>
            <person name="Banks D.J."/>
            <person name="Porcella S.F."/>
            <person name="Barbian K.D."/>
            <person name="Beres S.B."/>
            <person name="Philips L.E."/>
            <person name="Voyich J.M."/>
            <person name="DeLeo F.R."/>
            <person name="Martin J.M."/>
            <person name="Somerville G.A."/>
            <person name="Musser J.M."/>
        </authorList>
    </citation>
    <scope>NUCLEOTIDE SEQUENCE [LARGE SCALE GENOMIC DNA]</scope>
    <source>
        <strain>ATCC BAA-946 / MGAS10394</strain>
    </source>
</reference>
<accession>Q5XA40</accession>